<comment type="function">
    <text evidence="1">Could be involved in septation.</text>
</comment>
<comment type="similarity">
    <text evidence="1">Belongs to the SpoVG family.</text>
</comment>
<organism>
    <name type="scientific">Caldanaerobacter subterraneus subsp. tengcongensis (strain DSM 15242 / JCM 11007 / NBRC 100824 / MB4)</name>
    <name type="common">Thermoanaerobacter tengcongensis</name>
    <dbReference type="NCBI Taxonomy" id="273068"/>
    <lineage>
        <taxon>Bacteria</taxon>
        <taxon>Bacillati</taxon>
        <taxon>Bacillota</taxon>
        <taxon>Clostridia</taxon>
        <taxon>Thermoanaerobacterales</taxon>
        <taxon>Thermoanaerobacteraceae</taxon>
        <taxon>Caldanaerobacter</taxon>
    </lineage>
</organism>
<reference key="1">
    <citation type="journal article" date="2002" name="Genome Res.">
        <title>A complete sequence of the T. tengcongensis genome.</title>
        <authorList>
            <person name="Bao Q."/>
            <person name="Tian Y."/>
            <person name="Li W."/>
            <person name="Xu Z."/>
            <person name="Xuan Z."/>
            <person name="Hu S."/>
            <person name="Dong W."/>
            <person name="Yang J."/>
            <person name="Chen Y."/>
            <person name="Xue Y."/>
            <person name="Xu Y."/>
            <person name="Lai X."/>
            <person name="Huang L."/>
            <person name="Dong X."/>
            <person name="Ma Y."/>
            <person name="Ling L."/>
            <person name="Tan H."/>
            <person name="Chen R."/>
            <person name="Wang J."/>
            <person name="Yu J."/>
            <person name="Yang H."/>
        </authorList>
    </citation>
    <scope>NUCLEOTIDE SEQUENCE [LARGE SCALE GENOMIC DNA]</scope>
    <source>
        <strain>DSM 15242 / JCM 11007 / NBRC 100824 / MB4</strain>
    </source>
</reference>
<feature type="chain" id="PRO_0000157216" description="Putative septation protein SpoVG">
    <location>
        <begin position="1"/>
        <end position="91"/>
    </location>
</feature>
<evidence type="ECO:0000255" key="1">
    <source>
        <dbReference type="HAMAP-Rule" id="MF_00819"/>
    </source>
</evidence>
<protein>
    <recommendedName>
        <fullName evidence="1">Putative septation protein SpoVG</fullName>
    </recommendedName>
</protein>
<gene>
    <name evidence="1" type="primary">spoVG</name>
    <name type="ordered locus">TTE2573</name>
</gene>
<accession>Q8R751</accession>
<name>SP5G_CALS4</name>
<dbReference type="EMBL" id="AE008691">
    <property type="protein sequence ID" value="AAM25697.1"/>
    <property type="molecule type" value="Genomic_DNA"/>
</dbReference>
<dbReference type="RefSeq" id="WP_011026574.1">
    <property type="nucleotide sequence ID" value="NZ_JANUCV010000001.1"/>
</dbReference>
<dbReference type="SMR" id="Q8R751"/>
<dbReference type="STRING" id="273068.TTE2573"/>
<dbReference type="KEGG" id="tte:TTE2573"/>
<dbReference type="eggNOG" id="COG2088">
    <property type="taxonomic scope" value="Bacteria"/>
</dbReference>
<dbReference type="HOGENOM" id="CLU_103669_2_1_9"/>
<dbReference type="OrthoDB" id="9796286at2"/>
<dbReference type="Proteomes" id="UP000000555">
    <property type="component" value="Chromosome"/>
</dbReference>
<dbReference type="GO" id="GO:0000917">
    <property type="term" value="P:division septum assembly"/>
    <property type="evidence" value="ECO:0007669"/>
    <property type="project" value="UniProtKB-KW"/>
</dbReference>
<dbReference type="GO" id="GO:0030435">
    <property type="term" value="P:sporulation resulting in formation of a cellular spore"/>
    <property type="evidence" value="ECO:0007669"/>
    <property type="project" value="InterPro"/>
</dbReference>
<dbReference type="Gene3D" id="3.30.1120.40">
    <property type="entry name" value="Stage V sporulation protein G"/>
    <property type="match status" value="1"/>
</dbReference>
<dbReference type="HAMAP" id="MF_00819">
    <property type="entry name" value="SpoVG"/>
    <property type="match status" value="1"/>
</dbReference>
<dbReference type="InterPro" id="IPR007170">
    <property type="entry name" value="SpoVG"/>
</dbReference>
<dbReference type="InterPro" id="IPR036751">
    <property type="entry name" value="SpoVG_sf"/>
</dbReference>
<dbReference type="NCBIfam" id="NF009749">
    <property type="entry name" value="PRK13259.1"/>
    <property type="match status" value="1"/>
</dbReference>
<dbReference type="PANTHER" id="PTHR38429">
    <property type="entry name" value="SEPTATION PROTEIN SPOVG-RELATED"/>
    <property type="match status" value="1"/>
</dbReference>
<dbReference type="PANTHER" id="PTHR38429:SF1">
    <property type="entry name" value="SEPTATION PROTEIN SPOVG-RELATED"/>
    <property type="match status" value="1"/>
</dbReference>
<dbReference type="Pfam" id="PF04026">
    <property type="entry name" value="SpoVG"/>
    <property type="match status" value="1"/>
</dbReference>
<dbReference type="SUPFAM" id="SSF160537">
    <property type="entry name" value="SpoVG-like"/>
    <property type="match status" value="1"/>
</dbReference>
<keyword id="KW-0131">Cell cycle</keyword>
<keyword id="KW-0132">Cell division</keyword>
<keyword id="KW-1185">Reference proteome</keyword>
<keyword id="KW-0717">Septation</keyword>
<proteinExistence type="inferred from homology"/>
<sequence>MKITDVRVRKLNDEGRMKAVVSVTFDNEFVVHDIKVIEGQNGLFIAMPSRKTPEGEFKDIAHPINSDTRNKLQKAILEEYEKAKENNSNKE</sequence>